<keyword id="KW-0067">ATP-binding</keyword>
<keyword id="KW-0997">Cell inner membrane</keyword>
<keyword id="KW-1003">Cell membrane</keyword>
<keyword id="KW-0963">Cytoplasm</keyword>
<keyword id="KW-0472">Membrane</keyword>
<keyword id="KW-0479">Metal-binding</keyword>
<keyword id="KW-0547">Nucleotide-binding</keyword>
<keyword id="KW-0653">Protein transport</keyword>
<keyword id="KW-1278">Translocase</keyword>
<keyword id="KW-0811">Translocation</keyword>
<keyword id="KW-0813">Transport</keyword>
<keyword id="KW-0862">Zinc</keyword>
<sequence length="905" mass="102580">MLASLIGGIFGTKNERELKRMRKIVDQINALEPTISALSDADLSAKTPEFKERYNKGESLDKLLPEAFAVCREAAKRVMGMRHYDVQLIGGITLHEGKIAEMRTGEGKTLMGTLACYLNALSGQGVHVITVNDYLAQRDAELNRPLFEFLGLSIGIIYSMQSPTEKAEAYQADITYGTNNEFGFDYLRDNMVFSLQEKKQRGLNYAIIDEVDSILIDEARTPLIISGQSEDSSQLYAAINSIPPKLQPQKEEKVADGGHFWIDEKQRSVEMTEIGFETVEQELIQMGLLAEGESLYSATNLNLVHHVTAAIRAHFLYHRDVHYIIHNGEVIIVDEHTGRTMPGRRWSEGLHQAVEAKESLEIQPENQTLATTTFQNYFRLYKKLSGMTGTADTEAAEMKEIYGLDVVIIPTHRPMVRQDQNDLIYLNRNGKYDAIVKEIKNIQETRAPILVGTATIEASEILSHKLTQAGIRHEVLNAKQHEREADIIAQAGSPDSVTIATNMAGRGTDIILGGNWKAKLAKIENPTLEDEERLKAEWERDHETVLSAGGLHIIGSERHESRRIDNQLRGRAGRQGDPGVSRFYLSLEDDLMRIFAGDRVVGMMRAMGLKEDEAIEHKMVSRSIENAQRKVEARNFDIRKNLLKYDDVNNEQRKIIYSQRDEILAEHTLQDYIEEMHHEVMVGLIANFIPPESIHDQWDIEGLENALRVDLGIEVPVQQWLDEDRRLDEEALVQRITDEVLARYHARREQMGEESAAMLERHFMLNSLDRHWKDHLAAMDYLRQGIHLRGYAQKNPEQEYKKEAFNLFVNMLGVIKSDVVTDLSRIHVPTPEELAELEAQQQQQAEAMRLSFEHDEVDGLTGAVTHHEVEEQPIVSSDHIVPPSSRNAPCPCGSGLKYKQCHGRL</sequence>
<dbReference type="EC" id="7.4.2.8" evidence="1"/>
<dbReference type="EMBL" id="CR543861">
    <property type="protein sequence ID" value="CAG67568.1"/>
    <property type="molecule type" value="Genomic_DNA"/>
</dbReference>
<dbReference type="RefSeq" id="WP_004919773.1">
    <property type="nucleotide sequence ID" value="NC_005966.1"/>
</dbReference>
<dbReference type="SMR" id="Q6FEE0"/>
<dbReference type="STRING" id="202950.GCA_001485005_00880"/>
<dbReference type="GeneID" id="45233120"/>
<dbReference type="KEGG" id="aci:ACIAD0648"/>
<dbReference type="eggNOG" id="COG0653">
    <property type="taxonomic scope" value="Bacteria"/>
</dbReference>
<dbReference type="HOGENOM" id="CLU_005314_3_0_6"/>
<dbReference type="OrthoDB" id="9805579at2"/>
<dbReference type="BioCyc" id="ASP62977:ACIAD_RS02960-MONOMER"/>
<dbReference type="Proteomes" id="UP000000430">
    <property type="component" value="Chromosome"/>
</dbReference>
<dbReference type="GO" id="GO:0031522">
    <property type="term" value="C:cell envelope Sec protein transport complex"/>
    <property type="evidence" value="ECO:0007669"/>
    <property type="project" value="TreeGrafter"/>
</dbReference>
<dbReference type="GO" id="GO:0005829">
    <property type="term" value="C:cytosol"/>
    <property type="evidence" value="ECO:0007669"/>
    <property type="project" value="TreeGrafter"/>
</dbReference>
<dbReference type="GO" id="GO:0005886">
    <property type="term" value="C:plasma membrane"/>
    <property type="evidence" value="ECO:0007669"/>
    <property type="project" value="UniProtKB-SubCell"/>
</dbReference>
<dbReference type="GO" id="GO:0005524">
    <property type="term" value="F:ATP binding"/>
    <property type="evidence" value="ECO:0007669"/>
    <property type="project" value="UniProtKB-UniRule"/>
</dbReference>
<dbReference type="GO" id="GO:0046872">
    <property type="term" value="F:metal ion binding"/>
    <property type="evidence" value="ECO:0007669"/>
    <property type="project" value="UniProtKB-KW"/>
</dbReference>
<dbReference type="GO" id="GO:0008564">
    <property type="term" value="F:protein-exporting ATPase activity"/>
    <property type="evidence" value="ECO:0007669"/>
    <property type="project" value="UniProtKB-EC"/>
</dbReference>
<dbReference type="GO" id="GO:0065002">
    <property type="term" value="P:intracellular protein transmembrane transport"/>
    <property type="evidence" value="ECO:0007669"/>
    <property type="project" value="UniProtKB-UniRule"/>
</dbReference>
<dbReference type="GO" id="GO:0017038">
    <property type="term" value="P:protein import"/>
    <property type="evidence" value="ECO:0007669"/>
    <property type="project" value="InterPro"/>
</dbReference>
<dbReference type="GO" id="GO:0006605">
    <property type="term" value="P:protein targeting"/>
    <property type="evidence" value="ECO:0007669"/>
    <property type="project" value="UniProtKB-UniRule"/>
</dbReference>
<dbReference type="GO" id="GO:0043952">
    <property type="term" value="P:protein transport by the Sec complex"/>
    <property type="evidence" value="ECO:0007669"/>
    <property type="project" value="TreeGrafter"/>
</dbReference>
<dbReference type="CDD" id="cd17928">
    <property type="entry name" value="DEXDc_SecA"/>
    <property type="match status" value="1"/>
</dbReference>
<dbReference type="CDD" id="cd18803">
    <property type="entry name" value="SF2_C_secA"/>
    <property type="match status" value="1"/>
</dbReference>
<dbReference type="FunFam" id="3.40.50.300:FF:000113">
    <property type="entry name" value="Preprotein translocase subunit SecA"/>
    <property type="match status" value="1"/>
</dbReference>
<dbReference type="FunFam" id="3.90.1440.10:FF:000001">
    <property type="entry name" value="Preprotein translocase subunit SecA"/>
    <property type="match status" value="1"/>
</dbReference>
<dbReference type="FunFam" id="1.10.3060.10:FF:000003">
    <property type="entry name" value="Protein translocase subunit SecA"/>
    <property type="match status" value="1"/>
</dbReference>
<dbReference type="FunFam" id="3.40.50.300:FF:000334">
    <property type="entry name" value="Protein translocase subunit SecA"/>
    <property type="match status" value="1"/>
</dbReference>
<dbReference type="Gene3D" id="1.10.3060.10">
    <property type="entry name" value="Helical scaffold and wing domains of SecA"/>
    <property type="match status" value="1"/>
</dbReference>
<dbReference type="Gene3D" id="3.40.50.300">
    <property type="entry name" value="P-loop containing nucleotide triphosphate hydrolases"/>
    <property type="match status" value="2"/>
</dbReference>
<dbReference type="Gene3D" id="3.90.1440.10">
    <property type="entry name" value="SecA, preprotein cross-linking domain"/>
    <property type="match status" value="1"/>
</dbReference>
<dbReference type="HAMAP" id="MF_01382">
    <property type="entry name" value="SecA"/>
    <property type="match status" value="1"/>
</dbReference>
<dbReference type="InterPro" id="IPR014001">
    <property type="entry name" value="Helicase_ATP-bd"/>
</dbReference>
<dbReference type="InterPro" id="IPR001650">
    <property type="entry name" value="Helicase_C-like"/>
</dbReference>
<dbReference type="InterPro" id="IPR027417">
    <property type="entry name" value="P-loop_NTPase"/>
</dbReference>
<dbReference type="InterPro" id="IPR004027">
    <property type="entry name" value="SEC_C_motif"/>
</dbReference>
<dbReference type="InterPro" id="IPR000185">
    <property type="entry name" value="SecA"/>
</dbReference>
<dbReference type="InterPro" id="IPR020937">
    <property type="entry name" value="SecA_CS"/>
</dbReference>
<dbReference type="InterPro" id="IPR011115">
    <property type="entry name" value="SecA_DEAD"/>
</dbReference>
<dbReference type="InterPro" id="IPR014018">
    <property type="entry name" value="SecA_motor_DEAD"/>
</dbReference>
<dbReference type="InterPro" id="IPR011130">
    <property type="entry name" value="SecA_preprotein_X-link_dom"/>
</dbReference>
<dbReference type="InterPro" id="IPR044722">
    <property type="entry name" value="SecA_SF2_C"/>
</dbReference>
<dbReference type="InterPro" id="IPR011116">
    <property type="entry name" value="SecA_Wing/Scaffold"/>
</dbReference>
<dbReference type="InterPro" id="IPR036266">
    <property type="entry name" value="SecA_Wing/Scaffold_sf"/>
</dbReference>
<dbReference type="InterPro" id="IPR036670">
    <property type="entry name" value="SecA_X-link_sf"/>
</dbReference>
<dbReference type="NCBIfam" id="NF009538">
    <property type="entry name" value="PRK12904.1"/>
    <property type="match status" value="1"/>
</dbReference>
<dbReference type="NCBIfam" id="TIGR00963">
    <property type="entry name" value="secA"/>
    <property type="match status" value="1"/>
</dbReference>
<dbReference type="PANTHER" id="PTHR30612:SF0">
    <property type="entry name" value="CHLOROPLAST PROTEIN-TRANSPORTING ATPASE"/>
    <property type="match status" value="1"/>
</dbReference>
<dbReference type="PANTHER" id="PTHR30612">
    <property type="entry name" value="SECA INNER MEMBRANE COMPONENT OF SEC PROTEIN SECRETION SYSTEM"/>
    <property type="match status" value="1"/>
</dbReference>
<dbReference type="Pfam" id="PF21090">
    <property type="entry name" value="P-loop_SecA"/>
    <property type="match status" value="1"/>
</dbReference>
<dbReference type="Pfam" id="PF02810">
    <property type="entry name" value="SEC-C"/>
    <property type="match status" value="1"/>
</dbReference>
<dbReference type="Pfam" id="PF07517">
    <property type="entry name" value="SecA_DEAD"/>
    <property type="match status" value="1"/>
</dbReference>
<dbReference type="Pfam" id="PF01043">
    <property type="entry name" value="SecA_PP_bind"/>
    <property type="match status" value="1"/>
</dbReference>
<dbReference type="Pfam" id="PF07516">
    <property type="entry name" value="SecA_SW"/>
    <property type="match status" value="1"/>
</dbReference>
<dbReference type="PRINTS" id="PR00906">
    <property type="entry name" value="SECA"/>
</dbReference>
<dbReference type="SMART" id="SM00957">
    <property type="entry name" value="SecA_DEAD"/>
    <property type="match status" value="1"/>
</dbReference>
<dbReference type="SMART" id="SM00958">
    <property type="entry name" value="SecA_PP_bind"/>
    <property type="match status" value="1"/>
</dbReference>
<dbReference type="SUPFAM" id="SSF81886">
    <property type="entry name" value="Helical scaffold and wing domains of SecA"/>
    <property type="match status" value="1"/>
</dbReference>
<dbReference type="SUPFAM" id="SSF52540">
    <property type="entry name" value="P-loop containing nucleoside triphosphate hydrolases"/>
    <property type="match status" value="2"/>
</dbReference>
<dbReference type="SUPFAM" id="SSF81767">
    <property type="entry name" value="Pre-protein crosslinking domain of SecA"/>
    <property type="match status" value="1"/>
</dbReference>
<dbReference type="PROSITE" id="PS01312">
    <property type="entry name" value="SECA"/>
    <property type="match status" value="1"/>
</dbReference>
<dbReference type="PROSITE" id="PS51196">
    <property type="entry name" value="SECA_MOTOR_DEAD"/>
    <property type="match status" value="1"/>
</dbReference>
<organism>
    <name type="scientific">Acinetobacter baylyi (strain ATCC 33305 / BD413 / ADP1)</name>
    <dbReference type="NCBI Taxonomy" id="62977"/>
    <lineage>
        <taxon>Bacteria</taxon>
        <taxon>Pseudomonadati</taxon>
        <taxon>Pseudomonadota</taxon>
        <taxon>Gammaproteobacteria</taxon>
        <taxon>Moraxellales</taxon>
        <taxon>Moraxellaceae</taxon>
        <taxon>Acinetobacter</taxon>
    </lineage>
</organism>
<accession>Q6FEE0</accession>
<feature type="chain" id="PRO_0000320712" description="Protein translocase subunit SecA">
    <location>
        <begin position="1"/>
        <end position="905"/>
    </location>
</feature>
<feature type="binding site" evidence="1">
    <location>
        <position position="87"/>
    </location>
    <ligand>
        <name>ATP</name>
        <dbReference type="ChEBI" id="CHEBI:30616"/>
    </ligand>
</feature>
<feature type="binding site" evidence="1">
    <location>
        <begin position="105"/>
        <end position="109"/>
    </location>
    <ligand>
        <name>ATP</name>
        <dbReference type="ChEBI" id="CHEBI:30616"/>
    </ligand>
</feature>
<feature type="binding site" evidence="1">
    <location>
        <position position="509"/>
    </location>
    <ligand>
        <name>ATP</name>
        <dbReference type="ChEBI" id="CHEBI:30616"/>
    </ligand>
</feature>
<feature type="binding site" evidence="1">
    <location>
        <position position="890"/>
    </location>
    <ligand>
        <name>Zn(2+)</name>
        <dbReference type="ChEBI" id="CHEBI:29105"/>
    </ligand>
</feature>
<feature type="binding site" evidence="1">
    <location>
        <position position="892"/>
    </location>
    <ligand>
        <name>Zn(2+)</name>
        <dbReference type="ChEBI" id="CHEBI:29105"/>
    </ligand>
</feature>
<feature type="binding site" evidence="1">
    <location>
        <position position="901"/>
    </location>
    <ligand>
        <name>Zn(2+)</name>
        <dbReference type="ChEBI" id="CHEBI:29105"/>
    </ligand>
</feature>
<feature type="binding site" evidence="1">
    <location>
        <position position="902"/>
    </location>
    <ligand>
        <name>Zn(2+)</name>
        <dbReference type="ChEBI" id="CHEBI:29105"/>
    </ligand>
</feature>
<reference key="1">
    <citation type="journal article" date="2004" name="Nucleic Acids Res.">
        <title>Unique features revealed by the genome sequence of Acinetobacter sp. ADP1, a versatile and naturally transformation competent bacterium.</title>
        <authorList>
            <person name="Barbe V."/>
            <person name="Vallenet D."/>
            <person name="Fonknechten N."/>
            <person name="Kreimeyer A."/>
            <person name="Oztas S."/>
            <person name="Labarre L."/>
            <person name="Cruveiller S."/>
            <person name="Robert C."/>
            <person name="Duprat S."/>
            <person name="Wincker P."/>
            <person name="Ornston L.N."/>
            <person name="Weissenbach J."/>
            <person name="Marliere P."/>
            <person name="Cohen G.N."/>
            <person name="Medigue C."/>
        </authorList>
    </citation>
    <scope>NUCLEOTIDE SEQUENCE [LARGE SCALE GENOMIC DNA]</scope>
    <source>
        <strain>ATCC 33305 / BD413 / ADP1</strain>
    </source>
</reference>
<gene>
    <name evidence="1" type="primary">secA</name>
    <name type="ordered locus">ACIAD0648</name>
</gene>
<proteinExistence type="inferred from homology"/>
<name>SECA_ACIAD</name>
<protein>
    <recommendedName>
        <fullName evidence="1">Protein translocase subunit SecA</fullName>
        <ecNumber evidence="1">7.4.2.8</ecNumber>
    </recommendedName>
</protein>
<comment type="function">
    <text evidence="1">Part of the Sec protein translocase complex. Interacts with the SecYEG preprotein conducting channel. Has a central role in coupling the hydrolysis of ATP to the transfer of proteins into and across the cell membrane, serving both as a receptor for the preprotein-SecB complex and as an ATP-driven molecular motor driving the stepwise translocation of polypeptide chains across the membrane.</text>
</comment>
<comment type="catalytic activity">
    <reaction evidence="1">
        <text>ATP + H2O + cellular proteinSide 1 = ADP + phosphate + cellular proteinSide 2.</text>
        <dbReference type="EC" id="7.4.2.8"/>
    </reaction>
</comment>
<comment type="cofactor">
    <cofactor evidence="1">
        <name>Zn(2+)</name>
        <dbReference type="ChEBI" id="CHEBI:29105"/>
    </cofactor>
    <text evidence="1">May bind 1 zinc ion per subunit.</text>
</comment>
<comment type="subunit">
    <text evidence="1">Monomer and homodimer. Part of the essential Sec protein translocation apparatus which comprises SecA, SecYEG and auxiliary proteins SecDF-YajC and YidC.</text>
</comment>
<comment type="subcellular location">
    <subcellularLocation>
        <location evidence="1">Cell inner membrane</location>
        <topology evidence="1">Peripheral membrane protein</topology>
        <orientation evidence="1">Cytoplasmic side</orientation>
    </subcellularLocation>
    <subcellularLocation>
        <location evidence="1">Cytoplasm</location>
    </subcellularLocation>
    <text evidence="1">Distribution is 50-50.</text>
</comment>
<comment type="similarity">
    <text evidence="1">Belongs to the SecA family.</text>
</comment>
<evidence type="ECO:0000255" key="1">
    <source>
        <dbReference type="HAMAP-Rule" id="MF_01382"/>
    </source>
</evidence>